<dbReference type="EMBL" id="CP000284">
    <property type="protein sequence ID" value="ABE48331.1"/>
    <property type="molecule type" value="Genomic_DNA"/>
</dbReference>
<dbReference type="RefSeq" id="WP_011478428.1">
    <property type="nucleotide sequence ID" value="NC_007947.1"/>
</dbReference>
<dbReference type="SMR" id="Q1GXC7"/>
<dbReference type="STRING" id="265072.Mfla_0060"/>
<dbReference type="KEGG" id="mfa:Mfla_0060"/>
<dbReference type="eggNOG" id="COG0316">
    <property type="taxonomic scope" value="Bacteria"/>
</dbReference>
<dbReference type="HOGENOM" id="CLU_069054_5_3_4"/>
<dbReference type="OrthoDB" id="9801228at2"/>
<dbReference type="Proteomes" id="UP000002440">
    <property type="component" value="Chromosome"/>
</dbReference>
<dbReference type="GO" id="GO:0051537">
    <property type="term" value="F:2 iron, 2 sulfur cluster binding"/>
    <property type="evidence" value="ECO:0007669"/>
    <property type="project" value="TreeGrafter"/>
</dbReference>
<dbReference type="GO" id="GO:0051539">
    <property type="term" value="F:4 iron, 4 sulfur cluster binding"/>
    <property type="evidence" value="ECO:0007669"/>
    <property type="project" value="TreeGrafter"/>
</dbReference>
<dbReference type="GO" id="GO:0005506">
    <property type="term" value="F:iron ion binding"/>
    <property type="evidence" value="ECO:0007669"/>
    <property type="project" value="UniProtKB-UniRule"/>
</dbReference>
<dbReference type="GO" id="GO:0016226">
    <property type="term" value="P:iron-sulfur cluster assembly"/>
    <property type="evidence" value="ECO:0007669"/>
    <property type="project" value="UniProtKB-UniRule"/>
</dbReference>
<dbReference type="FunFam" id="2.60.300.12:FF:000002">
    <property type="entry name" value="Iron-sulfur cluster insertion protein ErpA"/>
    <property type="match status" value="1"/>
</dbReference>
<dbReference type="Gene3D" id="2.60.300.12">
    <property type="entry name" value="HesB-like domain"/>
    <property type="match status" value="1"/>
</dbReference>
<dbReference type="HAMAP" id="MF_01380">
    <property type="entry name" value="Fe_S_insert_ErpA"/>
    <property type="match status" value="1"/>
</dbReference>
<dbReference type="InterPro" id="IPR000361">
    <property type="entry name" value="FeS_biogenesis"/>
</dbReference>
<dbReference type="InterPro" id="IPR016092">
    <property type="entry name" value="FeS_cluster_insertion"/>
</dbReference>
<dbReference type="InterPro" id="IPR017870">
    <property type="entry name" value="FeS_cluster_insertion_CS"/>
</dbReference>
<dbReference type="InterPro" id="IPR023063">
    <property type="entry name" value="FeS_cluster_insertion_RrpA"/>
</dbReference>
<dbReference type="InterPro" id="IPR035903">
    <property type="entry name" value="HesB-like_dom_sf"/>
</dbReference>
<dbReference type="NCBIfam" id="TIGR00049">
    <property type="entry name" value="iron-sulfur cluster assembly accessory protein"/>
    <property type="match status" value="1"/>
</dbReference>
<dbReference type="NCBIfam" id="NF010147">
    <property type="entry name" value="PRK13623.1"/>
    <property type="match status" value="1"/>
</dbReference>
<dbReference type="PANTHER" id="PTHR43011">
    <property type="entry name" value="IRON-SULFUR CLUSTER ASSEMBLY 2 HOMOLOG, MITOCHONDRIAL"/>
    <property type="match status" value="1"/>
</dbReference>
<dbReference type="PANTHER" id="PTHR43011:SF1">
    <property type="entry name" value="IRON-SULFUR CLUSTER ASSEMBLY 2 HOMOLOG, MITOCHONDRIAL"/>
    <property type="match status" value="1"/>
</dbReference>
<dbReference type="Pfam" id="PF01521">
    <property type="entry name" value="Fe-S_biosyn"/>
    <property type="match status" value="1"/>
</dbReference>
<dbReference type="SUPFAM" id="SSF89360">
    <property type="entry name" value="HesB-like domain"/>
    <property type="match status" value="1"/>
</dbReference>
<dbReference type="PROSITE" id="PS01152">
    <property type="entry name" value="HESB"/>
    <property type="match status" value="1"/>
</dbReference>
<organism>
    <name type="scientific">Methylobacillus flagellatus (strain ATCC 51484 / DSM 6875 / VKM B-1610 / KT)</name>
    <dbReference type="NCBI Taxonomy" id="265072"/>
    <lineage>
        <taxon>Bacteria</taxon>
        <taxon>Pseudomonadati</taxon>
        <taxon>Pseudomonadota</taxon>
        <taxon>Betaproteobacteria</taxon>
        <taxon>Nitrosomonadales</taxon>
        <taxon>Methylophilaceae</taxon>
        <taxon>Methylobacillus</taxon>
    </lineage>
</organism>
<keyword id="KW-0408">Iron</keyword>
<keyword id="KW-0411">Iron-sulfur</keyword>
<keyword id="KW-0479">Metal-binding</keyword>
<keyword id="KW-1185">Reference proteome</keyword>
<feature type="chain" id="PRO_0000311504" description="Putative iron-sulfur cluster insertion protein ErpA">
    <location>
        <begin position="1"/>
        <end position="117"/>
    </location>
</feature>
<feature type="binding site" evidence="1">
    <location>
        <position position="45"/>
    </location>
    <ligand>
        <name>iron-sulfur cluster</name>
        <dbReference type="ChEBI" id="CHEBI:30408"/>
    </ligand>
</feature>
<feature type="binding site" evidence="1">
    <location>
        <position position="109"/>
    </location>
    <ligand>
        <name>iron-sulfur cluster</name>
        <dbReference type="ChEBI" id="CHEBI:30408"/>
    </ligand>
</feature>
<feature type="binding site" evidence="1">
    <location>
        <position position="111"/>
    </location>
    <ligand>
        <name>iron-sulfur cluster</name>
        <dbReference type="ChEBI" id="CHEBI:30408"/>
    </ligand>
</feature>
<accession>Q1GXC7</accession>
<proteinExistence type="inferred from homology"/>
<sequence length="117" mass="12640">MNAVTEEIPSPLIFTDNAARKVKELIDEEGSPDLKLRVFVSGGGCSGFQYGFTFEETINEDDTTVDKDGVTLLIDPMSLQYLVGAEIDYQDSLQGSQFVIRNPNATTTCGCGSSFSA</sequence>
<name>ERPA_METFK</name>
<gene>
    <name evidence="1" type="primary">erpA</name>
    <name type="ordered locus">Mfla_0060</name>
</gene>
<evidence type="ECO:0000255" key="1">
    <source>
        <dbReference type="HAMAP-Rule" id="MF_01380"/>
    </source>
</evidence>
<comment type="function">
    <text evidence="1">Required for insertion of 4Fe-4S clusters.</text>
</comment>
<comment type="cofactor">
    <cofactor evidence="1">
        <name>iron-sulfur cluster</name>
        <dbReference type="ChEBI" id="CHEBI:30408"/>
    </cofactor>
    <text evidence="1">Binds 1 iron-sulfur cluster per subunit.</text>
</comment>
<comment type="subunit">
    <text evidence="1">Homodimer.</text>
</comment>
<comment type="similarity">
    <text evidence="1">Belongs to the HesB/IscA family.</text>
</comment>
<protein>
    <recommendedName>
        <fullName evidence="1">Putative iron-sulfur cluster insertion protein ErpA</fullName>
    </recommendedName>
</protein>
<reference key="1">
    <citation type="submission" date="2006-03" db="EMBL/GenBank/DDBJ databases">
        <title>Complete sequence of Methylobacillus flagellatus KT.</title>
        <authorList>
            <consortium name="US DOE Joint Genome Institute"/>
            <person name="Copeland A."/>
            <person name="Lucas S."/>
            <person name="Lapidus A."/>
            <person name="Barry K."/>
            <person name="Detter J.C."/>
            <person name="Glavina del Rio T."/>
            <person name="Hammon N."/>
            <person name="Israni S."/>
            <person name="Dalin E."/>
            <person name="Tice H."/>
            <person name="Pitluck S."/>
            <person name="Brettin T."/>
            <person name="Bruce D."/>
            <person name="Han C."/>
            <person name="Tapia R."/>
            <person name="Saunders E."/>
            <person name="Gilna P."/>
            <person name="Schmutz J."/>
            <person name="Larimer F."/>
            <person name="Land M."/>
            <person name="Kyrpides N."/>
            <person name="Anderson I."/>
            <person name="Richardson P."/>
        </authorList>
    </citation>
    <scope>NUCLEOTIDE SEQUENCE [LARGE SCALE GENOMIC DNA]</scope>
    <source>
        <strain>ATCC 51484 / DSM 6875 / VKM B-1610 / KT</strain>
    </source>
</reference>